<sequence length="143" mass="15655">MAIERTFSIIKPDAVAKNHIGAIYNRFETAGLKIIASKMLHLSKEQAEGFYAEHSERPFFGALVEFMTSGPICVQVLEGENAVLANREIMGATNPAEAARGTIRSDFADSIDENAVHGSDAVASAEREIAYFFSTEELCPRTR</sequence>
<organism>
    <name type="scientific">Shewanella sediminis (strain HAW-EB3)</name>
    <dbReference type="NCBI Taxonomy" id="425104"/>
    <lineage>
        <taxon>Bacteria</taxon>
        <taxon>Pseudomonadati</taxon>
        <taxon>Pseudomonadota</taxon>
        <taxon>Gammaproteobacteria</taxon>
        <taxon>Alteromonadales</taxon>
        <taxon>Shewanellaceae</taxon>
        <taxon>Shewanella</taxon>
    </lineage>
</organism>
<accession>A8FX96</accession>
<gene>
    <name evidence="1" type="primary">ndk</name>
    <name type="ordered locus">Ssed_2862</name>
</gene>
<evidence type="ECO:0000255" key="1">
    <source>
        <dbReference type="HAMAP-Rule" id="MF_00451"/>
    </source>
</evidence>
<feature type="chain" id="PRO_1000080980" description="Nucleoside diphosphate kinase">
    <location>
        <begin position="1"/>
        <end position="143"/>
    </location>
</feature>
<feature type="active site" description="Pros-phosphohistidine intermediate" evidence="1">
    <location>
        <position position="117"/>
    </location>
</feature>
<feature type="binding site" evidence="1">
    <location>
        <position position="11"/>
    </location>
    <ligand>
        <name>ATP</name>
        <dbReference type="ChEBI" id="CHEBI:30616"/>
    </ligand>
</feature>
<feature type="binding site" evidence="1">
    <location>
        <position position="59"/>
    </location>
    <ligand>
        <name>ATP</name>
        <dbReference type="ChEBI" id="CHEBI:30616"/>
    </ligand>
</feature>
<feature type="binding site" evidence="1">
    <location>
        <position position="87"/>
    </location>
    <ligand>
        <name>ATP</name>
        <dbReference type="ChEBI" id="CHEBI:30616"/>
    </ligand>
</feature>
<feature type="binding site" evidence="1">
    <location>
        <position position="93"/>
    </location>
    <ligand>
        <name>ATP</name>
        <dbReference type="ChEBI" id="CHEBI:30616"/>
    </ligand>
</feature>
<feature type="binding site" evidence="1">
    <location>
        <position position="104"/>
    </location>
    <ligand>
        <name>ATP</name>
        <dbReference type="ChEBI" id="CHEBI:30616"/>
    </ligand>
</feature>
<feature type="binding site" evidence="1">
    <location>
        <position position="114"/>
    </location>
    <ligand>
        <name>ATP</name>
        <dbReference type="ChEBI" id="CHEBI:30616"/>
    </ligand>
</feature>
<comment type="function">
    <text evidence="1">Major role in the synthesis of nucleoside triphosphates other than ATP. The ATP gamma phosphate is transferred to the NDP beta phosphate via a ping-pong mechanism, using a phosphorylated active-site intermediate.</text>
</comment>
<comment type="catalytic activity">
    <reaction evidence="1">
        <text>a 2'-deoxyribonucleoside 5'-diphosphate + ATP = a 2'-deoxyribonucleoside 5'-triphosphate + ADP</text>
        <dbReference type="Rhea" id="RHEA:44640"/>
        <dbReference type="ChEBI" id="CHEBI:30616"/>
        <dbReference type="ChEBI" id="CHEBI:61560"/>
        <dbReference type="ChEBI" id="CHEBI:73316"/>
        <dbReference type="ChEBI" id="CHEBI:456216"/>
        <dbReference type="EC" id="2.7.4.6"/>
    </reaction>
</comment>
<comment type="catalytic activity">
    <reaction evidence="1">
        <text>a ribonucleoside 5'-diphosphate + ATP = a ribonucleoside 5'-triphosphate + ADP</text>
        <dbReference type="Rhea" id="RHEA:18113"/>
        <dbReference type="ChEBI" id="CHEBI:30616"/>
        <dbReference type="ChEBI" id="CHEBI:57930"/>
        <dbReference type="ChEBI" id="CHEBI:61557"/>
        <dbReference type="ChEBI" id="CHEBI:456216"/>
        <dbReference type="EC" id="2.7.4.6"/>
    </reaction>
</comment>
<comment type="cofactor">
    <cofactor evidence="1">
        <name>Mg(2+)</name>
        <dbReference type="ChEBI" id="CHEBI:18420"/>
    </cofactor>
</comment>
<comment type="subunit">
    <text evidence="1">Homotetramer.</text>
</comment>
<comment type="subcellular location">
    <subcellularLocation>
        <location evidence="1">Cytoplasm</location>
    </subcellularLocation>
</comment>
<comment type="similarity">
    <text evidence="1">Belongs to the NDK family.</text>
</comment>
<name>NDK_SHESH</name>
<dbReference type="EC" id="2.7.4.6" evidence="1"/>
<dbReference type="EMBL" id="CP000821">
    <property type="protein sequence ID" value="ABV37469.1"/>
    <property type="molecule type" value="Genomic_DNA"/>
</dbReference>
<dbReference type="RefSeq" id="WP_012143199.1">
    <property type="nucleotide sequence ID" value="NC_009831.1"/>
</dbReference>
<dbReference type="SMR" id="A8FX96"/>
<dbReference type="STRING" id="425104.Ssed_2862"/>
<dbReference type="KEGG" id="sse:Ssed_2862"/>
<dbReference type="eggNOG" id="COG0105">
    <property type="taxonomic scope" value="Bacteria"/>
</dbReference>
<dbReference type="HOGENOM" id="CLU_060216_8_1_6"/>
<dbReference type="OrthoDB" id="9801161at2"/>
<dbReference type="Proteomes" id="UP000002015">
    <property type="component" value="Chromosome"/>
</dbReference>
<dbReference type="GO" id="GO:0005737">
    <property type="term" value="C:cytoplasm"/>
    <property type="evidence" value="ECO:0007669"/>
    <property type="project" value="UniProtKB-SubCell"/>
</dbReference>
<dbReference type="GO" id="GO:0005524">
    <property type="term" value="F:ATP binding"/>
    <property type="evidence" value="ECO:0007669"/>
    <property type="project" value="UniProtKB-UniRule"/>
</dbReference>
<dbReference type="GO" id="GO:0046872">
    <property type="term" value="F:metal ion binding"/>
    <property type="evidence" value="ECO:0007669"/>
    <property type="project" value="UniProtKB-KW"/>
</dbReference>
<dbReference type="GO" id="GO:0004550">
    <property type="term" value="F:nucleoside diphosphate kinase activity"/>
    <property type="evidence" value="ECO:0007669"/>
    <property type="project" value="UniProtKB-UniRule"/>
</dbReference>
<dbReference type="GO" id="GO:0006241">
    <property type="term" value="P:CTP biosynthetic process"/>
    <property type="evidence" value="ECO:0007669"/>
    <property type="project" value="UniProtKB-UniRule"/>
</dbReference>
<dbReference type="GO" id="GO:0006183">
    <property type="term" value="P:GTP biosynthetic process"/>
    <property type="evidence" value="ECO:0007669"/>
    <property type="project" value="UniProtKB-UniRule"/>
</dbReference>
<dbReference type="GO" id="GO:0006228">
    <property type="term" value="P:UTP biosynthetic process"/>
    <property type="evidence" value="ECO:0007669"/>
    <property type="project" value="UniProtKB-UniRule"/>
</dbReference>
<dbReference type="CDD" id="cd04413">
    <property type="entry name" value="NDPk_I"/>
    <property type="match status" value="1"/>
</dbReference>
<dbReference type="FunFam" id="3.30.70.141:FF:000001">
    <property type="entry name" value="Nucleoside diphosphate kinase"/>
    <property type="match status" value="1"/>
</dbReference>
<dbReference type="Gene3D" id="3.30.70.141">
    <property type="entry name" value="Nucleoside diphosphate kinase-like domain"/>
    <property type="match status" value="1"/>
</dbReference>
<dbReference type="HAMAP" id="MF_00451">
    <property type="entry name" value="NDP_kinase"/>
    <property type="match status" value="1"/>
</dbReference>
<dbReference type="InterPro" id="IPR034907">
    <property type="entry name" value="NDK-like_dom"/>
</dbReference>
<dbReference type="InterPro" id="IPR036850">
    <property type="entry name" value="NDK-like_dom_sf"/>
</dbReference>
<dbReference type="InterPro" id="IPR001564">
    <property type="entry name" value="Nucleoside_diP_kinase"/>
</dbReference>
<dbReference type="InterPro" id="IPR023005">
    <property type="entry name" value="Nucleoside_diP_kinase_AS"/>
</dbReference>
<dbReference type="NCBIfam" id="NF001908">
    <property type="entry name" value="PRK00668.1"/>
    <property type="match status" value="1"/>
</dbReference>
<dbReference type="PANTHER" id="PTHR11349">
    <property type="entry name" value="NUCLEOSIDE DIPHOSPHATE KINASE"/>
    <property type="match status" value="1"/>
</dbReference>
<dbReference type="Pfam" id="PF00334">
    <property type="entry name" value="NDK"/>
    <property type="match status" value="1"/>
</dbReference>
<dbReference type="PRINTS" id="PR01243">
    <property type="entry name" value="NUCDPKINASE"/>
</dbReference>
<dbReference type="SMART" id="SM00562">
    <property type="entry name" value="NDK"/>
    <property type="match status" value="1"/>
</dbReference>
<dbReference type="SUPFAM" id="SSF54919">
    <property type="entry name" value="Nucleoside diphosphate kinase, NDK"/>
    <property type="match status" value="1"/>
</dbReference>
<dbReference type="PROSITE" id="PS00469">
    <property type="entry name" value="NDPK"/>
    <property type="match status" value="1"/>
</dbReference>
<dbReference type="PROSITE" id="PS51374">
    <property type="entry name" value="NDPK_LIKE"/>
    <property type="match status" value="1"/>
</dbReference>
<proteinExistence type="inferred from homology"/>
<protein>
    <recommendedName>
        <fullName evidence="1">Nucleoside diphosphate kinase</fullName>
        <shortName evidence="1">NDK</shortName>
        <shortName evidence="1">NDP kinase</shortName>
        <ecNumber evidence="1">2.7.4.6</ecNumber>
    </recommendedName>
    <alternativeName>
        <fullName evidence="1">Nucleoside-2-P kinase</fullName>
    </alternativeName>
</protein>
<keyword id="KW-0067">ATP-binding</keyword>
<keyword id="KW-0963">Cytoplasm</keyword>
<keyword id="KW-0418">Kinase</keyword>
<keyword id="KW-0460">Magnesium</keyword>
<keyword id="KW-0479">Metal-binding</keyword>
<keyword id="KW-0546">Nucleotide metabolism</keyword>
<keyword id="KW-0547">Nucleotide-binding</keyword>
<keyword id="KW-0597">Phosphoprotein</keyword>
<keyword id="KW-1185">Reference proteome</keyword>
<keyword id="KW-0808">Transferase</keyword>
<reference key="1">
    <citation type="submission" date="2007-08" db="EMBL/GenBank/DDBJ databases">
        <title>Complete sequence of Shewanella sediminis HAW-EB3.</title>
        <authorList>
            <consortium name="US DOE Joint Genome Institute"/>
            <person name="Copeland A."/>
            <person name="Lucas S."/>
            <person name="Lapidus A."/>
            <person name="Barry K."/>
            <person name="Glavina del Rio T."/>
            <person name="Dalin E."/>
            <person name="Tice H."/>
            <person name="Pitluck S."/>
            <person name="Chertkov O."/>
            <person name="Brettin T."/>
            <person name="Bruce D."/>
            <person name="Detter J.C."/>
            <person name="Han C."/>
            <person name="Schmutz J."/>
            <person name="Larimer F."/>
            <person name="Land M."/>
            <person name="Hauser L."/>
            <person name="Kyrpides N."/>
            <person name="Kim E."/>
            <person name="Zhao J.-S."/>
            <person name="Richardson P."/>
        </authorList>
    </citation>
    <scope>NUCLEOTIDE SEQUENCE [LARGE SCALE GENOMIC DNA]</scope>
    <source>
        <strain>HAW-EB3</strain>
    </source>
</reference>